<proteinExistence type="inferred from homology"/>
<name>TRMD_CHRFK</name>
<organism>
    <name type="scientific">Christiangramia forsetii (strain DSM 17595 / CGMCC 1.15422 / KT0803)</name>
    <name type="common">Gramella forsetii</name>
    <dbReference type="NCBI Taxonomy" id="411154"/>
    <lineage>
        <taxon>Bacteria</taxon>
        <taxon>Pseudomonadati</taxon>
        <taxon>Bacteroidota</taxon>
        <taxon>Flavobacteriia</taxon>
        <taxon>Flavobacteriales</taxon>
        <taxon>Flavobacteriaceae</taxon>
        <taxon>Christiangramia</taxon>
    </lineage>
</organism>
<dbReference type="EC" id="2.1.1.228" evidence="1"/>
<dbReference type="EMBL" id="CU207366">
    <property type="protein sequence ID" value="CAL65598.1"/>
    <property type="molecule type" value="Genomic_DNA"/>
</dbReference>
<dbReference type="RefSeq" id="WP_011708535.1">
    <property type="nucleotide sequence ID" value="NC_008571.1"/>
</dbReference>
<dbReference type="SMR" id="A0LZ03"/>
<dbReference type="STRING" id="411154.GFO_0620"/>
<dbReference type="KEGG" id="gfo:GFO_0620"/>
<dbReference type="eggNOG" id="COG0336">
    <property type="taxonomic scope" value="Bacteria"/>
</dbReference>
<dbReference type="HOGENOM" id="CLU_047363_0_1_10"/>
<dbReference type="OrthoDB" id="9807416at2"/>
<dbReference type="Proteomes" id="UP000000755">
    <property type="component" value="Chromosome"/>
</dbReference>
<dbReference type="GO" id="GO:0005829">
    <property type="term" value="C:cytosol"/>
    <property type="evidence" value="ECO:0007669"/>
    <property type="project" value="TreeGrafter"/>
</dbReference>
<dbReference type="GO" id="GO:0052906">
    <property type="term" value="F:tRNA (guanine(37)-N1)-methyltransferase activity"/>
    <property type="evidence" value="ECO:0007669"/>
    <property type="project" value="UniProtKB-UniRule"/>
</dbReference>
<dbReference type="GO" id="GO:0002939">
    <property type="term" value="P:tRNA N1-guanine methylation"/>
    <property type="evidence" value="ECO:0007669"/>
    <property type="project" value="TreeGrafter"/>
</dbReference>
<dbReference type="CDD" id="cd18080">
    <property type="entry name" value="TrmD-like"/>
    <property type="match status" value="1"/>
</dbReference>
<dbReference type="FunFam" id="3.40.1280.10:FF:000001">
    <property type="entry name" value="tRNA (guanine-N(1)-)-methyltransferase"/>
    <property type="match status" value="1"/>
</dbReference>
<dbReference type="Gene3D" id="3.40.1280.10">
    <property type="match status" value="1"/>
</dbReference>
<dbReference type="Gene3D" id="1.10.1270.20">
    <property type="entry name" value="tRNA(m1g37)methyltransferase, domain 2"/>
    <property type="match status" value="1"/>
</dbReference>
<dbReference type="HAMAP" id="MF_00605">
    <property type="entry name" value="TrmD"/>
    <property type="match status" value="1"/>
</dbReference>
<dbReference type="InterPro" id="IPR029028">
    <property type="entry name" value="Alpha/beta_knot_MTases"/>
</dbReference>
<dbReference type="InterPro" id="IPR023148">
    <property type="entry name" value="tRNA_m1G_MeTrfase_C_sf"/>
</dbReference>
<dbReference type="InterPro" id="IPR002649">
    <property type="entry name" value="tRNA_m1G_MeTrfase_TrmD"/>
</dbReference>
<dbReference type="InterPro" id="IPR029026">
    <property type="entry name" value="tRNA_m1G_MTases_N"/>
</dbReference>
<dbReference type="InterPro" id="IPR016009">
    <property type="entry name" value="tRNA_MeTrfase_TRMD/TRM10"/>
</dbReference>
<dbReference type="NCBIfam" id="NF000648">
    <property type="entry name" value="PRK00026.1"/>
    <property type="match status" value="1"/>
</dbReference>
<dbReference type="NCBIfam" id="TIGR00088">
    <property type="entry name" value="trmD"/>
    <property type="match status" value="1"/>
</dbReference>
<dbReference type="PANTHER" id="PTHR46417">
    <property type="entry name" value="TRNA (GUANINE-N(1)-)-METHYLTRANSFERASE"/>
    <property type="match status" value="1"/>
</dbReference>
<dbReference type="PANTHER" id="PTHR46417:SF1">
    <property type="entry name" value="TRNA (GUANINE-N(1)-)-METHYLTRANSFERASE"/>
    <property type="match status" value="1"/>
</dbReference>
<dbReference type="Pfam" id="PF01746">
    <property type="entry name" value="tRNA_m1G_MT"/>
    <property type="match status" value="1"/>
</dbReference>
<dbReference type="PIRSF" id="PIRSF000386">
    <property type="entry name" value="tRNA_mtase"/>
    <property type="match status" value="1"/>
</dbReference>
<dbReference type="SUPFAM" id="SSF75217">
    <property type="entry name" value="alpha/beta knot"/>
    <property type="match status" value="1"/>
</dbReference>
<reference key="1">
    <citation type="journal article" date="2006" name="Environ. Microbiol.">
        <title>Whole genome analysis of the marine Bacteroidetes'Gramella forsetii' reveals adaptations to degradation of polymeric organic matter.</title>
        <authorList>
            <person name="Bauer M."/>
            <person name="Kube M."/>
            <person name="Teeling H."/>
            <person name="Richter M."/>
            <person name="Lombardot T."/>
            <person name="Allers E."/>
            <person name="Wuerdemann C.A."/>
            <person name="Quast C."/>
            <person name="Kuhl H."/>
            <person name="Knaust F."/>
            <person name="Woebken D."/>
            <person name="Bischof K."/>
            <person name="Mussmann M."/>
            <person name="Choudhuri J.V."/>
            <person name="Meyer F."/>
            <person name="Reinhardt R."/>
            <person name="Amann R.I."/>
            <person name="Gloeckner F.O."/>
        </authorList>
    </citation>
    <scope>NUCLEOTIDE SEQUENCE [LARGE SCALE GENOMIC DNA]</scope>
    <source>
        <strain>DSM 17595 / CGMCC 1.15422 / KT0803</strain>
    </source>
</reference>
<gene>
    <name evidence="1" type="primary">trmD</name>
    <name type="ordered locus">GFO_0620</name>
</gene>
<sequence length="226" mass="25426">MRIDIITVVPDILKSPFEASILQRAIEKGLVEIHLHNLRDYTTDNYKQIDDYQFGGGAGMVMMIEPIDKCISELKSEREYNEVIYMTPDGATLNQKTANSLSLSENIIILCGHYKGVDQRVRDQFITKEISIGDYVLSGGELGAAVLCDSIIRLIPGVLGNETSALTDSFQDNLLAPPVYTRPSEYKGWEVPSILTSGNLPKIEEWRENQAYERTKKLRPDLLDDE</sequence>
<accession>A0LZ03</accession>
<protein>
    <recommendedName>
        <fullName evidence="1">tRNA (guanine-N(1)-)-methyltransferase</fullName>
        <ecNumber evidence="1">2.1.1.228</ecNumber>
    </recommendedName>
    <alternativeName>
        <fullName evidence="1">M1G-methyltransferase</fullName>
    </alternativeName>
    <alternativeName>
        <fullName evidence="1">tRNA [GM37] methyltransferase</fullName>
    </alternativeName>
</protein>
<feature type="chain" id="PRO_1000006480" description="tRNA (guanine-N(1)-)-methyltransferase">
    <location>
        <begin position="1"/>
        <end position="226"/>
    </location>
</feature>
<feature type="binding site" evidence="1">
    <location>
        <position position="112"/>
    </location>
    <ligand>
        <name>S-adenosyl-L-methionine</name>
        <dbReference type="ChEBI" id="CHEBI:59789"/>
    </ligand>
</feature>
<feature type="binding site" evidence="1">
    <location>
        <begin position="132"/>
        <end position="137"/>
    </location>
    <ligand>
        <name>S-adenosyl-L-methionine</name>
        <dbReference type="ChEBI" id="CHEBI:59789"/>
    </ligand>
</feature>
<comment type="function">
    <text evidence="1">Specifically methylates guanosine-37 in various tRNAs.</text>
</comment>
<comment type="catalytic activity">
    <reaction evidence="1">
        <text>guanosine(37) in tRNA + S-adenosyl-L-methionine = N(1)-methylguanosine(37) in tRNA + S-adenosyl-L-homocysteine + H(+)</text>
        <dbReference type="Rhea" id="RHEA:36899"/>
        <dbReference type="Rhea" id="RHEA-COMP:10145"/>
        <dbReference type="Rhea" id="RHEA-COMP:10147"/>
        <dbReference type="ChEBI" id="CHEBI:15378"/>
        <dbReference type="ChEBI" id="CHEBI:57856"/>
        <dbReference type="ChEBI" id="CHEBI:59789"/>
        <dbReference type="ChEBI" id="CHEBI:73542"/>
        <dbReference type="ChEBI" id="CHEBI:74269"/>
        <dbReference type="EC" id="2.1.1.228"/>
    </reaction>
</comment>
<comment type="subunit">
    <text evidence="1">Homodimer.</text>
</comment>
<comment type="subcellular location">
    <subcellularLocation>
        <location evidence="1">Cytoplasm</location>
    </subcellularLocation>
</comment>
<comment type="similarity">
    <text evidence="1">Belongs to the RNA methyltransferase TrmD family.</text>
</comment>
<evidence type="ECO:0000255" key="1">
    <source>
        <dbReference type="HAMAP-Rule" id="MF_00605"/>
    </source>
</evidence>
<keyword id="KW-0963">Cytoplasm</keyword>
<keyword id="KW-0489">Methyltransferase</keyword>
<keyword id="KW-0949">S-adenosyl-L-methionine</keyword>
<keyword id="KW-0808">Transferase</keyword>
<keyword id="KW-0819">tRNA processing</keyword>